<proteinExistence type="inferred from homology"/>
<gene>
    <name evidence="1" type="primary">htpX2</name>
    <name type="synonym">htpX-2</name>
    <name type="ordered locus">SSO3231</name>
</gene>
<comment type="cofactor">
    <cofactor evidence="1">
        <name>Zn(2+)</name>
        <dbReference type="ChEBI" id="CHEBI:29105"/>
    </cofactor>
    <text evidence="1">Binds 1 zinc ion per subunit.</text>
</comment>
<comment type="subcellular location">
    <subcellularLocation>
        <location evidence="1">Cell membrane</location>
        <topology evidence="1">Multi-pass membrane protein</topology>
    </subcellularLocation>
</comment>
<comment type="similarity">
    <text evidence="1">Belongs to the peptidase M48B family.</text>
</comment>
<keyword id="KW-1003">Cell membrane</keyword>
<keyword id="KW-0378">Hydrolase</keyword>
<keyword id="KW-0472">Membrane</keyword>
<keyword id="KW-0479">Metal-binding</keyword>
<keyword id="KW-0482">Metalloprotease</keyword>
<keyword id="KW-0645">Protease</keyword>
<keyword id="KW-1185">Reference proteome</keyword>
<keyword id="KW-0812">Transmembrane</keyword>
<keyword id="KW-1133">Transmembrane helix</keyword>
<keyword id="KW-0862">Zinc</keyword>
<accession>Q97TZ9</accession>
<name>HTPX2_SACS2</name>
<dbReference type="EC" id="3.4.24.-" evidence="1"/>
<dbReference type="EMBL" id="AE006641">
    <property type="protein sequence ID" value="AAK43325.1"/>
    <property type="molecule type" value="Genomic_DNA"/>
</dbReference>
<dbReference type="PIR" id="F90508">
    <property type="entry name" value="F90508"/>
</dbReference>
<dbReference type="FunCoup" id="Q97TZ9">
    <property type="interactions" value="82"/>
</dbReference>
<dbReference type="STRING" id="273057.SSO3231"/>
<dbReference type="PaxDb" id="273057-SSO3231"/>
<dbReference type="EnsemblBacteria" id="AAK43325">
    <property type="protein sequence ID" value="AAK43325"/>
    <property type="gene ID" value="SSO3231"/>
</dbReference>
<dbReference type="KEGG" id="sso:SSO3231"/>
<dbReference type="PATRIC" id="fig|273057.12.peg.3333"/>
<dbReference type="eggNOG" id="arCOG01331">
    <property type="taxonomic scope" value="Archaea"/>
</dbReference>
<dbReference type="HOGENOM" id="CLU_042266_4_1_2"/>
<dbReference type="InParanoid" id="Q97TZ9"/>
<dbReference type="PhylomeDB" id="Q97TZ9"/>
<dbReference type="Proteomes" id="UP000001974">
    <property type="component" value="Chromosome"/>
</dbReference>
<dbReference type="GO" id="GO:0005886">
    <property type="term" value="C:plasma membrane"/>
    <property type="evidence" value="ECO:0007669"/>
    <property type="project" value="UniProtKB-SubCell"/>
</dbReference>
<dbReference type="GO" id="GO:0004222">
    <property type="term" value="F:metalloendopeptidase activity"/>
    <property type="evidence" value="ECO:0007669"/>
    <property type="project" value="UniProtKB-UniRule"/>
</dbReference>
<dbReference type="GO" id="GO:0008270">
    <property type="term" value="F:zinc ion binding"/>
    <property type="evidence" value="ECO:0007669"/>
    <property type="project" value="UniProtKB-UniRule"/>
</dbReference>
<dbReference type="GO" id="GO:0006508">
    <property type="term" value="P:proteolysis"/>
    <property type="evidence" value="ECO:0007669"/>
    <property type="project" value="UniProtKB-KW"/>
</dbReference>
<dbReference type="CDD" id="cd07338">
    <property type="entry name" value="M48B_HtpX_like"/>
    <property type="match status" value="1"/>
</dbReference>
<dbReference type="Gene3D" id="3.30.2010.10">
    <property type="entry name" value="Metalloproteases ('zincins'), catalytic domain"/>
    <property type="match status" value="1"/>
</dbReference>
<dbReference type="HAMAP" id="MF_00188">
    <property type="entry name" value="Pept_M48_protease_HtpX"/>
    <property type="match status" value="1"/>
</dbReference>
<dbReference type="InterPro" id="IPR050083">
    <property type="entry name" value="HtpX_protease"/>
</dbReference>
<dbReference type="InterPro" id="IPR022919">
    <property type="entry name" value="Pept_M48_protease_HtpX"/>
</dbReference>
<dbReference type="InterPro" id="IPR001915">
    <property type="entry name" value="Peptidase_M48"/>
</dbReference>
<dbReference type="NCBIfam" id="NF002322">
    <property type="entry name" value="PRK01265.1"/>
    <property type="match status" value="1"/>
</dbReference>
<dbReference type="PANTHER" id="PTHR43221">
    <property type="entry name" value="PROTEASE HTPX"/>
    <property type="match status" value="1"/>
</dbReference>
<dbReference type="PANTHER" id="PTHR43221:SF2">
    <property type="entry name" value="PROTEASE HTPX HOMOLOG"/>
    <property type="match status" value="1"/>
</dbReference>
<dbReference type="Pfam" id="PF01435">
    <property type="entry name" value="Peptidase_M48"/>
    <property type="match status" value="1"/>
</dbReference>
<protein>
    <recommendedName>
        <fullName evidence="1">Protease HtpX homolog 2</fullName>
        <ecNumber evidence="1">3.4.24.-</ecNumber>
    </recommendedName>
</protein>
<organism>
    <name type="scientific">Saccharolobus solfataricus (strain ATCC 35092 / DSM 1617 / JCM 11322 / P2)</name>
    <name type="common">Sulfolobus solfataricus</name>
    <dbReference type="NCBI Taxonomy" id="273057"/>
    <lineage>
        <taxon>Archaea</taxon>
        <taxon>Thermoproteota</taxon>
        <taxon>Thermoprotei</taxon>
        <taxon>Sulfolobales</taxon>
        <taxon>Sulfolobaceae</taxon>
        <taxon>Saccharolobus</taxon>
    </lineage>
</organism>
<feature type="chain" id="PRO_0000138931" description="Protease HtpX homolog 2">
    <location>
        <begin position="1"/>
        <end position="325"/>
    </location>
</feature>
<feature type="transmembrane region" description="Helical" evidence="1">
    <location>
        <begin position="10"/>
        <end position="30"/>
    </location>
</feature>
<feature type="transmembrane region" description="Helical" evidence="1">
    <location>
        <begin position="41"/>
        <end position="61"/>
    </location>
</feature>
<feature type="transmembrane region" description="Helical" evidence="1">
    <location>
        <begin position="159"/>
        <end position="179"/>
    </location>
</feature>
<feature type="transmembrane region" description="Helical" evidence="1">
    <location>
        <begin position="196"/>
        <end position="216"/>
    </location>
</feature>
<feature type="active site" evidence="1">
    <location>
        <position position="148"/>
    </location>
</feature>
<feature type="binding site" evidence="1">
    <location>
        <position position="147"/>
    </location>
    <ligand>
        <name>Zn(2+)</name>
        <dbReference type="ChEBI" id="CHEBI:29105"/>
        <note>catalytic</note>
    </ligand>
</feature>
<feature type="binding site" evidence="1">
    <location>
        <position position="151"/>
    </location>
    <ligand>
        <name>Zn(2+)</name>
        <dbReference type="ChEBI" id="CHEBI:29105"/>
        <note>catalytic</note>
    </ligand>
</feature>
<feature type="binding site" evidence="1">
    <location>
        <position position="223"/>
    </location>
    <ligand>
        <name>Zn(2+)</name>
        <dbReference type="ChEBI" id="CHEBI:29105"/>
        <note>catalytic</note>
    </ligand>
</feature>
<reference key="1">
    <citation type="journal article" date="2001" name="Proc. Natl. Acad. Sci. U.S.A.">
        <title>The complete genome of the crenarchaeon Sulfolobus solfataricus P2.</title>
        <authorList>
            <person name="She Q."/>
            <person name="Singh R.K."/>
            <person name="Confalonieri F."/>
            <person name="Zivanovic Y."/>
            <person name="Allard G."/>
            <person name="Awayez M.J."/>
            <person name="Chan-Weiher C.C.-Y."/>
            <person name="Clausen I.G."/>
            <person name="Curtis B.A."/>
            <person name="De Moors A."/>
            <person name="Erauso G."/>
            <person name="Fletcher C."/>
            <person name="Gordon P.M.K."/>
            <person name="Heikamp-de Jong I."/>
            <person name="Jeffries A.C."/>
            <person name="Kozera C.J."/>
            <person name="Medina N."/>
            <person name="Peng X."/>
            <person name="Thi-Ngoc H.P."/>
            <person name="Redder P."/>
            <person name="Schenk M.E."/>
            <person name="Theriault C."/>
            <person name="Tolstrup N."/>
            <person name="Charlebois R.L."/>
            <person name="Doolittle W.F."/>
            <person name="Duguet M."/>
            <person name="Gaasterland T."/>
            <person name="Garrett R.A."/>
            <person name="Ragan M.A."/>
            <person name="Sensen C.W."/>
            <person name="Van der Oost J."/>
        </authorList>
    </citation>
    <scope>NUCLEOTIDE SEQUENCE [LARGE SCALE GENOMIC DNA]</scope>
    <source>
        <strain>ATCC 35092 / DSM 1617 / JCM 11322 / P2</strain>
    </source>
</reference>
<evidence type="ECO:0000255" key="1">
    <source>
        <dbReference type="HAMAP-Rule" id="MF_00188"/>
    </source>
</evidence>
<sequence length="325" mass="36420">MNWEVVKLRLNMALATLGITLLGFALALAVADYAFGAQFGVGLILSILIFIFFLNIIQWLFGPYMINWAYRTVEVTPTDPVYGWLYSTVAEVAKYNGFREVPKVYIADVPFPNAFAYGSPIAGKRIAFTLPILKLLNRDEIMAVAGHELGHLKHRDVELLMAVGLIPALIYYLGWWLFWGGLFSGGGNGRGNNGGLVFLLGIIMMAVSFVFQLLVLSLNRMREAYADVNSALTVPGGKENLQLALAKLTLSMDPEALERFKKKSTTNQMASMLFFTNAIEEVPTWNAKELVEIWKTTKVPWYADIFMDHPHPAKRIQLLDKVSKY</sequence>